<feature type="chain" id="PRO_0000298417" description="Disulfide bond formation protein B">
    <location>
        <begin position="1"/>
        <end position="176"/>
    </location>
</feature>
<feature type="topological domain" description="Cytoplasmic" evidence="1">
    <location>
        <begin position="1"/>
        <end position="14"/>
    </location>
</feature>
<feature type="transmembrane region" description="Helical" evidence="1">
    <location>
        <begin position="15"/>
        <end position="31"/>
    </location>
</feature>
<feature type="topological domain" description="Periplasmic" evidence="1">
    <location>
        <begin position="32"/>
        <end position="49"/>
    </location>
</feature>
<feature type="transmembrane region" description="Helical" evidence="1">
    <location>
        <begin position="50"/>
        <end position="65"/>
    </location>
</feature>
<feature type="topological domain" description="Cytoplasmic" evidence="1">
    <location>
        <begin position="66"/>
        <end position="71"/>
    </location>
</feature>
<feature type="transmembrane region" description="Helical" evidence="1">
    <location>
        <begin position="72"/>
        <end position="89"/>
    </location>
</feature>
<feature type="topological domain" description="Periplasmic" evidence="1">
    <location>
        <begin position="90"/>
        <end position="144"/>
    </location>
</feature>
<feature type="transmembrane region" description="Helical" evidence="1">
    <location>
        <begin position="145"/>
        <end position="163"/>
    </location>
</feature>
<feature type="topological domain" description="Cytoplasmic" evidence="1">
    <location>
        <begin position="164"/>
        <end position="176"/>
    </location>
</feature>
<feature type="disulfide bond" description="Redox-active" evidence="1">
    <location>
        <begin position="41"/>
        <end position="44"/>
    </location>
</feature>
<feature type="disulfide bond" description="Redox-active" evidence="1">
    <location>
        <begin position="104"/>
        <end position="130"/>
    </location>
</feature>
<accession>Q3Z2W3</accession>
<comment type="function">
    <text evidence="1">Required for disulfide bond formation in some periplasmic proteins. Acts by oxidizing the DsbA protein.</text>
</comment>
<comment type="subcellular location">
    <subcellularLocation>
        <location evidence="1">Cell inner membrane</location>
        <topology evidence="1">Multi-pass membrane protein</topology>
    </subcellularLocation>
</comment>
<comment type="similarity">
    <text evidence="1">Belongs to the DsbB family.</text>
</comment>
<protein>
    <recommendedName>
        <fullName evidence="1">Disulfide bond formation protein B</fullName>
    </recommendedName>
    <alternativeName>
        <fullName evidence="1">Disulfide oxidoreductase</fullName>
    </alternativeName>
</protein>
<reference key="1">
    <citation type="journal article" date="2005" name="Nucleic Acids Res.">
        <title>Genome dynamics and diversity of Shigella species, the etiologic agents of bacillary dysentery.</title>
        <authorList>
            <person name="Yang F."/>
            <person name="Yang J."/>
            <person name="Zhang X."/>
            <person name="Chen L."/>
            <person name="Jiang Y."/>
            <person name="Yan Y."/>
            <person name="Tang X."/>
            <person name="Wang J."/>
            <person name="Xiong Z."/>
            <person name="Dong J."/>
            <person name="Xue Y."/>
            <person name="Zhu Y."/>
            <person name="Xu X."/>
            <person name="Sun L."/>
            <person name="Chen S."/>
            <person name="Nie H."/>
            <person name="Peng J."/>
            <person name="Xu J."/>
            <person name="Wang Y."/>
            <person name="Yuan Z."/>
            <person name="Wen Y."/>
            <person name="Yao Z."/>
            <person name="Shen Y."/>
            <person name="Qiang B."/>
            <person name="Hou Y."/>
            <person name="Yu J."/>
            <person name="Jin Q."/>
        </authorList>
    </citation>
    <scope>NUCLEOTIDE SEQUENCE [LARGE SCALE GENOMIC DNA]</scope>
    <source>
        <strain>Ss046</strain>
    </source>
</reference>
<gene>
    <name evidence="1" type="primary">dsbB</name>
    <name type="ordered locus">SSON_1177</name>
</gene>
<name>DSBB_SHISS</name>
<dbReference type="EMBL" id="CP000038">
    <property type="protein sequence ID" value="AAZ87899.1"/>
    <property type="molecule type" value="Genomic_DNA"/>
</dbReference>
<dbReference type="RefSeq" id="WP_000943457.1">
    <property type="nucleotide sequence ID" value="NC_007384.1"/>
</dbReference>
<dbReference type="SMR" id="Q3Z2W3"/>
<dbReference type="GeneID" id="93776247"/>
<dbReference type="KEGG" id="ssn:SSON_1177"/>
<dbReference type="HOGENOM" id="CLU_098660_2_0_6"/>
<dbReference type="Proteomes" id="UP000002529">
    <property type="component" value="Chromosome"/>
</dbReference>
<dbReference type="GO" id="GO:0005886">
    <property type="term" value="C:plasma membrane"/>
    <property type="evidence" value="ECO:0007669"/>
    <property type="project" value="UniProtKB-SubCell"/>
</dbReference>
<dbReference type="GO" id="GO:0009055">
    <property type="term" value="F:electron transfer activity"/>
    <property type="evidence" value="ECO:0007669"/>
    <property type="project" value="UniProtKB-UniRule"/>
</dbReference>
<dbReference type="GO" id="GO:0015035">
    <property type="term" value="F:protein-disulfide reductase activity"/>
    <property type="evidence" value="ECO:0007669"/>
    <property type="project" value="UniProtKB-UniRule"/>
</dbReference>
<dbReference type="GO" id="GO:0006457">
    <property type="term" value="P:protein folding"/>
    <property type="evidence" value="ECO:0007669"/>
    <property type="project" value="InterPro"/>
</dbReference>
<dbReference type="FunFam" id="1.20.1550.10:FF:000001">
    <property type="entry name" value="Disulfide bond formation protein B"/>
    <property type="match status" value="1"/>
</dbReference>
<dbReference type="Gene3D" id="1.20.1550.10">
    <property type="entry name" value="DsbB-like"/>
    <property type="match status" value="1"/>
</dbReference>
<dbReference type="HAMAP" id="MF_00286">
    <property type="entry name" value="DsbB"/>
    <property type="match status" value="1"/>
</dbReference>
<dbReference type="InterPro" id="IPR003752">
    <property type="entry name" value="DiS_bond_form_DsbB/BdbC"/>
</dbReference>
<dbReference type="InterPro" id="IPR022920">
    <property type="entry name" value="Disulphide_bond_form_DsbB"/>
</dbReference>
<dbReference type="InterPro" id="IPR050183">
    <property type="entry name" value="DsbB"/>
</dbReference>
<dbReference type="InterPro" id="IPR023380">
    <property type="entry name" value="DsbB-like_sf"/>
</dbReference>
<dbReference type="NCBIfam" id="NF002485">
    <property type="entry name" value="PRK01749.1"/>
    <property type="match status" value="1"/>
</dbReference>
<dbReference type="PANTHER" id="PTHR36570">
    <property type="entry name" value="DISULFIDE BOND FORMATION PROTEIN B"/>
    <property type="match status" value="1"/>
</dbReference>
<dbReference type="PANTHER" id="PTHR36570:SF2">
    <property type="entry name" value="DISULFIDE BOND FORMATION PROTEIN B"/>
    <property type="match status" value="1"/>
</dbReference>
<dbReference type="Pfam" id="PF02600">
    <property type="entry name" value="DsbB"/>
    <property type="match status" value="1"/>
</dbReference>
<dbReference type="SUPFAM" id="SSF158442">
    <property type="entry name" value="DsbB-like"/>
    <property type="match status" value="1"/>
</dbReference>
<sequence length="176" mass="20174">MLRFLNQCSQGRGAWLLMAFTALALELTALWFQHVMLLKPCVLCIYERCALFGVLGAALIGAIAPKTPLRYVAMVIWLYSAFRGVQLTYEHTMLQLYPSPFATCDFMVRFPEWLPLDKWVPQVFVASGDCAERQWDFLGLEMPQWLLGIFIAYLIVAVLVMISQPFKAKKRDLFGR</sequence>
<evidence type="ECO:0000255" key="1">
    <source>
        <dbReference type="HAMAP-Rule" id="MF_00286"/>
    </source>
</evidence>
<keyword id="KW-0997">Cell inner membrane</keyword>
<keyword id="KW-1003">Cell membrane</keyword>
<keyword id="KW-0143">Chaperone</keyword>
<keyword id="KW-1015">Disulfide bond</keyword>
<keyword id="KW-0249">Electron transport</keyword>
<keyword id="KW-0472">Membrane</keyword>
<keyword id="KW-0560">Oxidoreductase</keyword>
<keyword id="KW-0676">Redox-active center</keyword>
<keyword id="KW-1185">Reference proteome</keyword>
<keyword id="KW-0812">Transmembrane</keyword>
<keyword id="KW-1133">Transmembrane helix</keyword>
<keyword id="KW-0813">Transport</keyword>
<organism>
    <name type="scientific">Shigella sonnei (strain Ss046)</name>
    <dbReference type="NCBI Taxonomy" id="300269"/>
    <lineage>
        <taxon>Bacteria</taxon>
        <taxon>Pseudomonadati</taxon>
        <taxon>Pseudomonadota</taxon>
        <taxon>Gammaproteobacteria</taxon>
        <taxon>Enterobacterales</taxon>
        <taxon>Enterobacteriaceae</taxon>
        <taxon>Shigella</taxon>
    </lineage>
</organism>
<proteinExistence type="inferred from homology"/>